<accession>Q756Y8</accession>
<feature type="transit peptide" description="Mitochondrion" evidence="2">
    <location>
        <begin position="1"/>
        <end status="unknown"/>
    </location>
</feature>
<feature type="chain" id="PRO_0000372389" description="Large ribosomal subunit protein uL29m">
    <location>
        <begin status="unknown"/>
        <end position="341"/>
    </location>
</feature>
<feature type="region of interest" description="Disordered" evidence="3">
    <location>
        <begin position="44"/>
        <end position="74"/>
    </location>
</feature>
<feature type="compositionally biased region" description="Basic residues" evidence="3">
    <location>
        <begin position="48"/>
        <end position="62"/>
    </location>
</feature>
<keyword id="KW-0496">Mitochondrion</keyword>
<keyword id="KW-1185">Reference proteome</keyword>
<keyword id="KW-0687">Ribonucleoprotein</keyword>
<keyword id="KW-0689">Ribosomal protein</keyword>
<keyword id="KW-0809">Transit peptide</keyword>
<protein>
    <recommendedName>
        <fullName evidence="4">Large ribosomal subunit protein uL29m</fullName>
    </recommendedName>
    <alternativeName>
        <fullName>54S ribosomal protein L4, mitochondrial</fullName>
    </alternativeName>
</protein>
<sequence>MENYYTLSGNQEGVASCYRIAEDSEGVISMWVFQRGLHSSRSVLARTRYTKPKPKPPRRSKVRAPTQTTHHDTDLKVTAPIPPAAANLECNPEHPLWQFFDGGRFMRSAEELDDKSRPWTVPELRRKSFDDLHSLWYACLKERNILAREMHLRRNMQEEGSAHAQLDERVRTTMWRIRHVLSERDWAYRLAHAELGTQQAPLLREVEEAFLAVPEAEDGEAFDMLARLQRAVFGISEYIEENLVDRRFVDGLKYIATLKLRRFAPRDAAVEQLLQASEGGITDAGEAFVIFTAENTLADVKEAADAVNELREQGNKVDRYEEIATVAQYLKKLANAKKVAA</sequence>
<proteinExistence type="inferred from homology"/>
<evidence type="ECO:0000250" key="1"/>
<evidence type="ECO:0000255" key="2"/>
<evidence type="ECO:0000256" key="3">
    <source>
        <dbReference type="SAM" id="MobiDB-lite"/>
    </source>
</evidence>
<evidence type="ECO:0000305" key="4"/>
<name>RM04_EREGS</name>
<comment type="subunit">
    <text evidence="1">Component of the mitochondrial large ribosomal subunit. Mature mitochondrial ribosomes consist of a small (37S) and a large (54S) subunit. The 37S subunit contains at least 33 different proteins and 1 molecule of RNA (15S). The 54S subunit contains at least 45 different proteins and 1 molecule of RNA (21S) (By similarity).</text>
</comment>
<comment type="subcellular location">
    <subcellularLocation>
        <location evidence="1">Mitochondrion</location>
    </subcellularLocation>
</comment>
<comment type="similarity">
    <text evidence="4">Belongs to the universal ribosomal protein uL29 family.</text>
</comment>
<comment type="sequence caution" evidence="4">
    <conflict type="erroneous initiation">
        <sequence resource="EMBL-CDS" id="AAS52809"/>
    </conflict>
    <text>Extended N-terminus.</text>
</comment>
<gene>
    <name type="primary">MRPL4</name>
    <name type="ordered locus">AER126W</name>
</gene>
<organism>
    <name type="scientific">Eremothecium gossypii (strain ATCC 10895 / CBS 109.51 / FGSC 9923 / NRRL Y-1056)</name>
    <name type="common">Yeast</name>
    <name type="synonym">Ashbya gossypii</name>
    <dbReference type="NCBI Taxonomy" id="284811"/>
    <lineage>
        <taxon>Eukaryota</taxon>
        <taxon>Fungi</taxon>
        <taxon>Dikarya</taxon>
        <taxon>Ascomycota</taxon>
        <taxon>Saccharomycotina</taxon>
        <taxon>Saccharomycetes</taxon>
        <taxon>Saccharomycetales</taxon>
        <taxon>Saccharomycetaceae</taxon>
        <taxon>Eremothecium</taxon>
    </lineage>
</organism>
<reference key="1">
    <citation type="journal article" date="2004" name="Science">
        <title>The Ashbya gossypii genome as a tool for mapping the ancient Saccharomyces cerevisiae genome.</title>
        <authorList>
            <person name="Dietrich F.S."/>
            <person name="Voegeli S."/>
            <person name="Brachat S."/>
            <person name="Lerch A."/>
            <person name="Gates K."/>
            <person name="Steiner S."/>
            <person name="Mohr C."/>
            <person name="Poehlmann R."/>
            <person name="Luedi P."/>
            <person name="Choi S."/>
            <person name="Wing R.A."/>
            <person name="Flavier A."/>
            <person name="Gaffney T.D."/>
            <person name="Philippsen P."/>
        </authorList>
    </citation>
    <scope>NUCLEOTIDE SEQUENCE [LARGE SCALE GENOMIC DNA]</scope>
    <source>
        <strain>ATCC 10895 / CBS 109.51 / FGSC 9923 / NRRL Y-1056</strain>
    </source>
</reference>
<reference key="2">
    <citation type="journal article" date="2013" name="G3 (Bethesda)">
        <title>Genomes of Ashbya fungi isolated from insects reveal four mating-type loci, numerous translocations, lack of transposons, and distinct gene duplications.</title>
        <authorList>
            <person name="Dietrich F.S."/>
            <person name="Voegeli S."/>
            <person name="Kuo S."/>
            <person name="Philippsen P."/>
        </authorList>
    </citation>
    <scope>GENOME REANNOTATION</scope>
    <scope>SEQUENCE REVISION TO C-TERMINUS</scope>
    <source>
        <strain>ATCC 10895 / CBS 109.51 / FGSC 9923 / NRRL Y-1056</strain>
    </source>
</reference>
<dbReference type="EMBL" id="AE016818">
    <property type="protein sequence ID" value="AAS52809.2"/>
    <property type="status" value="ALT_INIT"/>
    <property type="molecule type" value="Genomic_DNA"/>
</dbReference>
<dbReference type="RefSeq" id="NP_984985.2">
    <property type="nucleotide sequence ID" value="NM_210339.2"/>
</dbReference>
<dbReference type="SMR" id="Q756Y8"/>
<dbReference type="FunCoup" id="Q756Y8">
    <property type="interactions" value="268"/>
</dbReference>
<dbReference type="STRING" id="284811.Q756Y8"/>
<dbReference type="EnsemblFungi" id="AAS52809">
    <property type="protein sequence ID" value="AAS52809"/>
    <property type="gene ID" value="AGOS_AER126W"/>
</dbReference>
<dbReference type="GeneID" id="4621191"/>
<dbReference type="KEGG" id="ago:AGOS_AER126W"/>
<dbReference type="eggNOG" id="KOG3331">
    <property type="taxonomic scope" value="Eukaryota"/>
</dbReference>
<dbReference type="HOGENOM" id="CLU_872105_0_0_1"/>
<dbReference type="InParanoid" id="Q756Y8"/>
<dbReference type="OMA" id="IRTTMWR"/>
<dbReference type="OrthoDB" id="270763at2759"/>
<dbReference type="Proteomes" id="UP000000591">
    <property type="component" value="Chromosome V"/>
</dbReference>
<dbReference type="GO" id="GO:0005762">
    <property type="term" value="C:mitochondrial large ribosomal subunit"/>
    <property type="evidence" value="ECO:0000318"/>
    <property type="project" value="GO_Central"/>
</dbReference>
<dbReference type="GO" id="GO:0003735">
    <property type="term" value="F:structural constituent of ribosome"/>
    <property type="evidence" value="ECO:0000318"/>
    <property type="project" value="GO_Central"/>
</dbReference>
<dbReference type="GO" id="GO:0032543">
    <property type="term" value="P:mitochondrial translation"/>
    <property type="evidence" value="ECO:0000318"/>
    <property type="project" value="GO_Central"/>
</dbReference>
<dbReference type="Gene3D" id="6.10.140.1190">
    <property type="match status" value="1"/>
</dbReference>
<dbReference type="Gene3D" id="6.10.330.20">
    <property type="match status" value="1"/>
</dbReference>
<dbReference type="InterPro" id="IPR038340">
    <property type="entry name" value="MRP-L47_sf"/>
</dbReference>
<dbReference type="InterPro" id="IPR010729">
    <property type="entry name" value="Ribosomal_uL29_mit"/>
</dbReference>
<dbReference type="PANTHER" id="PTHR21183:SF18">
    <property type="entry name" value="LARGE RIBOSOMAL SUBUNIT PROTEIN UL29M"/>
    <property type="match status" value="1"/>
</dbReference>
<dbReference type="PANTHER" id="PTHR21183">
    <property type="entry name" value="RIBOSOMAL PROTEIN L47, MITOCHONDRIAL-RELATED"/>
    <property type="match status" value="1"/>
</dbReference>
<dbReference type="Pfam" id="PF06984">
    <property type="entry name" value="MRP-L47"/>
    <property type="match status" value="1"/>
</dbReference>